<accession>A1UTM4</accession>
<organism>
    <name type="scientific">Bartonella bacilliformis (strain ATCC 35685 / KC583 / Herrer 020/F12,63)</name>
    <dbReference type="NCBI Taxonomy" id="360095"/>
    <lineage>
        <taxon>Bacteria</taxon>
        <taxon>Pseudomonadati</taxon>
        <taxon>Pseudomonadota</taxon>
        <taxon>Alphaproteobacteria</taxon>
        <taxon>Hyphomicrobiales</taxon>
        <taxon>Bartonellaceae</taxon>
        <taxon>Bartonella</taxon>
    </lineage>
</organism>
<name>GPMA_BARBK</name>
<proteinExistence type="inferred from homology"/>
<sequence>MRRTLVLVRHGQSEWNIKNLFTGWKDPDLTEKGRTEAITAGKNLKKAGLKFDIAYTSALQRAQKTAQHILEQMAQPDLQLIKNSALNERDYGDLSGLNKDDARQRWGQEQVHIWRRSYTIAPPNGESLRDTGARVWPYYFHHIQPHILRSQTVLIVAHGNSLRALIMVLEGLSSEEIVLQELATGVPIIYEFNADSTILSKKIIQS</sequence>
<keyword id="KW-0312">Gluconeogenesis</keyword>
<keyword id="KW-0324">Glycolysis</keyword>
<keyword id="KW-0413">Isomerase</keyword>
<evidence type="ECO:0000255" key="1">
    <source>
        <dbReference type="HAMAP-Rule" id="MF_01039"/>
    </source>
</evidence>
<gene>
    <name evidence="1" type="primary">gpmA</name>
    <name type="ordered locus">BARBAKC583_1052</name>
</gene>
<dbReference type="EC" id="5.4.2.11" evidence="1"/>
<dbReference type="EMBL" id="CP000524">
    <property type="protein sequence ID" value="ABM45290.1"/>
    <property type="molecule type" value="Genomic_DNA"/>
</dbReference>
<dbReference type="RefSeq" id="WP_005767615.1">
    <property type="nucleotide sequence ID" value="NC_008783.1"/>
</dbReference>
<dbReference type="SMR" id="A1UTM4"/>
<dbReference type="STRING" id="360095.BARBAKC583_1052"/>
<dbReference type="GeneID" id="4684320"/>
<dbReference type="KEGG" id="bbk:BARBAKC583_1052"/>
<dbReference type="PATRIC" id="fig|360095.6.peg.1021"/>
<dbReference type="eggNOG" id="COG0588">
    <property type="taxonomic scope" value="Bacteria"/>
</dbReference>
<dbReference type="HOGENOM" id="CLU_033323_1_4_5"/>
<dbReference type="OrthoDB" id="9781415at2"/>
<dbReference type="UniPathway" id="UPA00109">
    <property type="reaction ID" value="UER00186"/>
</dbReference>
<dbReference type="Proteomes" id="UP000000643">
    <property type="component" value="Chromosome"/>
</dbReference>
<dbReference type="GO" id="GO:0004619">
    <property type="term" value="F:phosphoglycerate mutase activity"/>
    <property type="evidence" value="ECO:0007669"/>
    <property type="project" value="UniProtKB-EC"/>
</dbReference>
<dbReference type="GO" id="GO:0006094">
    <property type="term" value="P:gluconeogenesis"/>
    <property type="evidence" value="ECO:0007669"/>
    <property type="project" value="UniProtKB-UniRule"/>
</dbReference>
<dbReference type="GO" id="GO:0006096">
    <property type="term" value="P:glycolytic process"/>
    <property type="evidence" value="ECO:0007669"/>
    <property type="project" value="UniProtKB-UniRule"/>
</dbReference>
<dbReference type="CDD" id="cd07067">
    <property type="entry name" value="HP_PGM_like"/>
    <property type="match status" value="1"/>
</dbReference>
<dbReference type="Gene3D" id="3.40.50.1240">
    <property type="entry name" value="Phosphoglycerate mutase-like"/>
    <property type="match status" value="1"/>
</dbReference>
<dbReference type="HAMAP" id="MF_01039">
    <property type="entry name" value="PGAM_GpmA"/>
    <property type="match status" value="1"/>
</dbReference>
<dbReference type="InterPro" id="IPR013078">
    <property type="entry name" value="His_Pase_superF_clade-1"/>
</dbReference>
<dbReference type="InterPro" id="IPR029033">
    <property type="entry name" value="His_PPase_superfam"/>
</dbReference>
<dbReference type="InterPro" id="IPR001345">
    <property type="entry name" value="PG/BPGM_mutase_AS"/>
</dbReference>
<dbReference type="InterPro" id="IPR005952">
    <property type="entry name" value="Phosphogly_mut1"/>
</dbReference>
<dbReference type="NCBIfam" id="TIGR01258">
    <property type="entry name" value="pgm_1"/>
    <property type="match status" value="1"/>
</dbReference>
<dbReference type="NCBIfam" id="NF002339">
    <property type="entry name" value="PRK01295.1"/>
    <property type="match status" value="1"/>
</dbReference>
<dbReference type="PANTHER" id="PTHR11931">
    <property type="entry name" value="PHOSPHOGLYCERATE MUTASE"/>
    <property type="match status" value="1"/>
</dbReference>
<dbReference type="Pfam" id="PF00300">
    <property type="entry name" value="His_Phos_1"/>
    <property type="match status" value="1"/>
</dbReference>
<dbReference type="PIRSF" id="PIRSF000709">
    <property type="entry name" value="6PFK_2-Ptase"/>
    <property type="match status" value="1"/>
</dbReference>
<dbReference type="SMART" id="SM00855">
    <property type="entry name" value="PGAM"/>
    <property type="match status" value="1"/>
</dbReference>
<dbReference type="SUPFAM" id="SSF53254">
    <property type="entry name" value="Phosphoglycerate mutase-like"/>
    <property type="match status" value="1"/>
</dbReference>
<dbReference type="PROSITE" id="PS00175">
    <property type="entry name" value="PG_MUTASE"/>
    <property type="match status" value="1"/>
</dbReference>
<comment type="function">
    <text evidence="1">Catalyzes the interconversion of 2-phosphoglycerate and 3-phosphoglycerate.</text>
</comment>
<comment type="catalytic activity">
    <reaction evidence="1">
        <text>(2R)-2-phosphoglycerate = (2R)-3-phosphoglycerate</text>
        <dbReference type="Rhea" id="RHEA:15901"/>
        <dbReference type="ChEBI" id="CHEBI:58272"/>
        <dbReference type="ChEBI" id="CHEBI:58289"/>
        <dbReference type="EC" id="5.4.2.11"/>
    </reaction>
</comment>
<comment type="pathway">
    <text evidence="1">Carbohydrate degradation; glycolysis; pyruvate from D-glyceraldehyde 3-phosphate: step 3/5.</text>
</comment>
<comment type="subunit">
    <text evidence="1">Homodimer.</text>
</comment>
<comment type="similarity">
    <text evidence="1">Belongs to the phosphoglycerate mutase family. BPG-dependent PGAM subfamily.</text>
</comment>
<feature type="chain" id="PRO_1000064030" description="2,3-bisphosphoglycerate-dependent phosphoglycerate mutase">
    <location>
        <begin position="1"/>
        <end position="206"/>
    </location>
</feature>
<feature type="active site" description="Tele-phosphohistidine intermediate" evidence="1">
    <location>
        <position position="10"/>
    </location>
</feature>
<feature type="active site" description="Proton donor/acceptor" evidence="1">
    <location>
        <position position="88"/>
    </location>
</feature>
<feature type="binding site" evidence="1">
    <location>
        <begin position="9"/>
        <end position="16"/>
    </location>
    <ligand>
        <name>substrate</name>
    </ligand>
</feature>
<feature type="binding site" evidence="1">
    <location>
        <begin position="22"/>
        <end position="23"/>
    </location>
    <ligand>
        <name>substrate</name>
    </ligand>
</feature>
<feature type="binding site" evidence="1">
    <location>
        <position position="61"/>
    </location>
    <ligand>
        <name>substrate</name>
    </ligand>
</feature>
<feature type="binding site" evidence="1">
    <location>
        <begin position="88"/>
        <end position="91"/>
    </location>
    <ligand>
        <name>substrate</name>
    </ligand>
</feature>
<feature type="binding site" evidence="1">
    <location>
        <position position="99"/>
    </location>
    <ligand>
        <name>substrate</name>
    </ligand>
</feature>
<feature type="binding site" evidence="1">
    <location>
        <begin position="115"/>
        <end position="116"/>
    </location>
    <ligand>
        <name>substrate</name>
    </ligand>
</feature>
<feature type="binding site" evidence="1">
    <location>
        <begin position="159"/>
        <end position="160"/>
    </location>
    <ligand>
        <name>substrate</name>
    </ligand>
</feature>
<feature type="site" description="Transition state stabilizer" evidence="1">
    <location>
        <position position="158"/>
    </location>
</feature>
<protein>
    <recommendedName>
        <fullName evidence="1">2,3-bisphosphoglycerate-dependent phosphoglycerate mutase</fullName>
        <shortName evidence="1">BPG-dependent PGAM</shortName>
        <shortName evidence="1">PGAM</shortName>
        <shortName evidence="1">Phosphoglyceromutase</shortName>
        <shortName evidence="1">dPGM</shortName>
        <ecNumber evidence="1">5.4.2.11</ecNumber>
    </recommendedName>
</protein>
<reference key="1">
    <citation type="submission" date="2006-12" db="EMBL/GenBank/DDBJ databases">
        <authorList>
            <person name="Hendrix L."/>
            <person name="Mohamoud Y."/>
            <person name="Radune D."/>
            <person name="Shvartsbeyn A."/>
            <person name="Daugherty S."/>
            <person name="Dodson R."/>
            <person name="Durkin A.S."/>
            <person name="Harkins D."/>
            <person name="Huot H."/>
            <person name="Kothari S.P."/>
            <person name="Madupu R."/>
            <person name="Li J."/>
            <person name="Nelson W.C."/>
            <person name="Shrivastava S."/>
            <person name="Giglio M.G."/>
            <person name="Haft D."/>
            <person name="Selengut J."/>
            <person name="Fraser-Ligget C."/>
            <person name="Seshadri R."/>
        </authorList>
    </citation>
    <scope>NUCLEOTIDE SEQUENCE [LARGE SCALE GENOMIC DNA]</scope>
    <source>
        <strain>ATCC 35685 / KC583 / Herrer 020/F12,63</strain>
    </source>
</reference>